<dbReference type="EMBL" id="AF285602">
    <property type="protein sequence ID" value="AAK31981.1"/>
    <property type="molecule type" value="mRNA"/>
</dbReference>
<dbReference type="EMBL" id="AF285603">
    <property type="protein sequence ID" value="AAK31982.1"/>
    <property type="molecule type" value="mRNA"/>
</dbReference>
<dbReference type="EMBL" id="AL354798">
    <property type="status" value="NOT_ANNOTATED_CDS"/>
    <property type="molecule type" value="Genomic_DNA"/>
</dbReference>
<dbReference type="EMBL" id="AL391560">
    <property type="status" value="NOT_ANNOTATED_CDS"/>
    <property type="molecule type" value="Genomic_DNA"/>
</dbReference>
<dbReference type="EMBL" id="BC064847">
    <property type="protein sequence ID" value="AAH64847.1"/>
    <property type="status" value="ALT_INIT"/>
    <property type="molecule type" value="mRNA"/>
</dbReference>
<dbReference type="EMBL" id="AK001907">
    <property type="protein sequence ID" value="BAA91972.1"/>
    <property type="status" value="ALT_INIT"/>
    <property type="molecule type" value="mRNA"/>
</dbReference>
<dbReference type="CCDS" id="CCDS9308.2">
    <molecule id="Q9BXT8-3"/>
</dbReference>
<dbReference type="RefSeq" id="NP_112567.2">
    <molecule id="Q9BXT8-3"/>
    <property type="nucleotide sequence ID" value="NM_031277.3"/>
</dbReference>
<dbReference type="PDB" id="2EQK">
    <property type="method" value="NMR"/>
    <property type="chains" value="A=949-1026"/>
</dbReference>
<dbReference type="PDBsum" id="2EQK"/>
<dbReference type="SMR" id="Q9BXT8"/>
<dbReference type="BioGRID" id="121096">
    <property type="interactions" value="13"/>
</dbReference>
<dbReference type="FunCoup" id="Q9BXT8">
    <property type="interactions" value="2"/>
</dbReference>
<dbReference type="IntAct" id="Q9BXT8">
    <property type="interactions" value="3"/>
</dbReference>
<dbReference type="MINT" id="Q9BXT8"/>
<dbReference type="STRING" id="9606.ENSP00000255324"/>
<dbReference type="GlyGen" id="Q9BXT8">
    <property type="glycosylation" value="1 site, 1 O-linked glycan (1 site)"/>
</dbReference>
<dbReference type="iPTMnet" id="Q9BXT8"/>
<dbReference type="PhosphoSitePlus" id="Q9BXT8"/>
<dbReference type="BioMuta" id="RNF17"/>
<dbReference type="DMDM" id="187608889"/>
<dbReference type="jPOST" id="Q9BXT8"/>
<dbReference type="MassIVE" id="Q9BXT8"/>
<dbReference type="PaxDb" id="9606-ENSP00000255324"/>
<dbReference type="PeptideAtlas" id="Q9BXT8"/>
<dbReference type="ProteomicsDB" id="79511">
    <molecule id="Q9BXT8-3"/>
</dbReference>
<dbReference type="ProteomicsDB" id="79512">
    <molecule id="Q9BXT8-1"/>
</dbReference>
<dbReference type="ProteomicsDB" id="79513">
    <molecule id="Q9BXT8-2"/>
</dbReference>
<dbReference type="ProteomicsDB" id="79514">
    <molecule id="Q9BXT8-4"/>
</dbReference>
<dbReference type="ProteomicsDB" id="79515">
    <molecule id="Q9BXT8-5"/>
</dbReference>
<dbReference type="Antibodypedia" id="22496">
    <property type="antibodies" value="71 antibodies from 18 providers"/>
</dbReference>
<dbReference type="DNASU" id="56163"/>
<dbReference type="Ensembl" id="ENST00000255324.10">
    <molecule id="Q9BXT8-3"/>
    <property type="protein sequence ID" value="ENSP00000255324.5"/>
    <property type="gene ID" value="ENSG00000132972.19"/>
</dbReference>
<dbReference type="Ensembl" id="ENST00000255325.6">
    <molecule id="Q9BXT8-1"/>
    <property type="protein sequence ID" value="ENSP00000255325.6"/>
    <property type="gene ID" value="ENSG00000132972.19"/>
</dbReference>
<dbReference type="GeneID" id="56163"/>
<dbReference type="KEGG" id="hsa:56163"/>
<dbReference type="MANE-Select" id="ENST00000255324.10">
    <property type="protein sequence ID" value="ENSP00000255324.5"/>
    <property type="RefSeq nucleotide sequence ID" value="NM_031277.3"/>
    <property type="RefSeq protein sequence ID" value="NP_112567.2"/>
</dbReference>
<dbReference type="UCSC" id="uc001upr.4">
    <molecule id="Q9BXT8-3"/>
    <property type="organism name" value="human"/>
</dbReference>
<dbReference type="AGR" id="HGNC:10060"/>
<dbReference type="CTD" id="56163"/>
<dbReference type="DisGeNET" id="56163"/>
<dbReference type="GeneCards" id="RNF17"/>
<dbReference type="HGNC" id="HGNC:10060">
    <property type="gene designation" value="RNF17"/>
</dbReference>
<dbReference type="HPA" id="ENSG00000132972">
    <property type="expression patterns" value="Tissue enriched (testis)"/>
</dbReference>
<dbReference type="MalaCards" id="RNF17"/>
<dbReference type="MIM" id="605793">
    <property type="type" value="gene"/>
</dbReference>
<dbReference type="neXtProt" id="NX_Q9BXT8"/>
<dbReference type="OpenTargets" id="ENSG00000132972"/>
<dbReference type="PharmGKB" id="PA34424"/>
<dbReference type="VEuPathDB" id="HostDB:ENSG00000132972"/>
<dbReference type="eggNOG" id="KOG2039">
    <property type="taxonomic scope" value="Eukaryota"/>
</dbReference>
<dbReference type="eggNOG" id="KOG2279">
    <property type="taxonomic scope" value="Eukaryota"/>
</dbReference>
<dbReference type="GeneTree" id="ENSGT00940000157559"/>
<dbReference type="HOGENOM" id="CLU_003202_1_0_1"/>
<dbReference type="InParanoid" id="Q9BXT8"/>
<dbReference type="OMA" id="HCAVKVP"/>
<dbReference type="OrthoDB" id="5800423at2759"/>
<dbReference type="PAN-GO" id="Q9BXT8">
    <property type="GO annotations" value="0 GO annotations based on evolutionary models"/>
</dbReference>
<dbReference type="PhylomeDB" id="Q9BXT8"/>
<dbReference type="PathwayCommons" id="Q9BXT8"/>
<dbReference type="SignaLink" id="Q9BXT8"/>
<dbReference type="SIGNOR" id="Q9BXT8"/>
<dbReference type="BioGRID-ORCS" id="56163">
    <property type="hits" value="13 hits in 1182 CRISPR screens"/>
</dbReference>
<dbReference type="CD-CODE" id="232F8A39">
    <property type="entry name" value="P-body"/>
</dbReference>
<dbReference type="ChiTaRS" id="RNF17">
    <property type="organism name" value="human"/>
</dbReference>
<dbReference type="EvolutionaryTrace" id="Q9BXT8"/>
<dbReference type="GenomeRNAi" id="56163"/>
<dbReference type="Pharos" id="Q9BXT8">
    <property type="development level" value="Tbio"/>
</dbReference>
<dbReference type="PRO" id="PR:Q9BXT8"/>
<dbReference type="Proteomes" id="UP000005640">
    <property type="component" value="Chromosome 13"/>
</dbReference>
<dbReference type="RNAct" id="Q9BXT8">
    <property type="molecule type" value="protein"/>
</dbReference>
<dbReference type="Bgee" id="ENSG00000132972">
    <property type="expression patterns" value="Expressed in male germ line stem cell (sensu Vertebrata) in testis and 114 other cell types or tissues"/>
</dbReference>
<dbReference type="ExpressionAtlas" id="Q9BXT8">
    <property type="expression patterns" value="baseline and differential"/>
</dbReference>
<dbReference type="GO" id="GO:0005737">
    <property type="term" value="C:cytoplasm"/>
    <property type="evidence" value="ECO:0007669"/>
    <property type="project" value="UniProtKB-SubCell"/>
</dbReference>
<dbReference type="GO" id="GO:0005634">
    <property type="term" value="C:nucleus"/>
    <property type="evidence" value="ECO:0007669"/>
    <property type="project" value="UniProtKB-SubCell"/>
</dbReference>
<dbReference type="GO" id="GO:0042802">
    <property type="term" value="F:identical protein binding"/>
    <property type="evidence" value="ECO:0007669"/>
    <property type="project" value="Ensembl"/>
</dbReference>
<dbReference type="GO" id="GO:0008270">
    <property type="term" value="F:zinc ion binding"/>
    <property type="evidence" value="ECO:0007669"/>
    <property type="project" value="UniProtKB-KW"/>
</dbReference>
<dbReference type="GO" id="GO:0007286">
    <property type="term" value="P:spermatid development"/>
    <property type="evidence" value="ECO:0007669"/>
    <property type="project" value="Ensembl"/>
</dbReference>
<dbReference type="CDD" id="cd20414">
    <property type="entry name" value="Tudor_TDRD4_rpt1"/>
    <property type="match status" value="1"/>
</dbReference>
<dbReference type="CDD" id="cd20415">
    <property type="entry name" value="Tudor_TDRD4_rpt2"/>
    <property type="match status" value="1"/>
</dbReference>
<dbReference type="CDD" id="cd20416">
    <property type="entry name" value="Tudor_TDRD4_rpt3"/>
    <property type="match status" value="1"/>
</dbReference>
<dbReference type="CDD" id="cd20417">
    <property type="entry name" value="Tudor_TDRD4_rpt4"/>
    <property type="match status" value="1"/>
</dbReference>
<dbReference type="CDD" id="cd20418">
    <property type="entry name" value="Tudor_TDRD4_rpt5"/>
    <property type="match status" value="1"/>
</dbReference>
<dbReference type="FunFam" id="2.30.30.140:FF:000114">
    <property type="entry name" value="RING finger protein 17"/>
    <property type="match status" value="1"/>
</dbReference>
<dbReference type="Gene3D" id="2.30.30.140">
    <property type="match status" value="5"/>
</dbReference>
<dbReference type="Gene3D" id="2.40.50.90">
    <property type="match status" value="4"/>
</dbReference>
<dbReference type="InterPro" id="IPR047845">
    <property type="entry name" value="RNF17-like_TUDOR_rpt1"/>
</dbReference>
<dbReference type="InterPro" id="IPR047847">
    <property type="entry name" value="RNF17-like_TUDOR_rpt2"/>
</dbReference>
<dbReference type="InterPro" id="IPR047848">
    <property type="entry name" value="RNF17-like_TUDOR_rpt3"/>
</dbReference>
<dbReference type="InterPro" id="IPR047849">
    <property type="entry name" value="RNF17-like_TUDOR_rpt4"/>
</dbReference>
<dbReference type="InterPro" id="IPR047850">
    <property type="entry name" value="RNF17-like_TUDOR_rpt5"/>
</dbReference>
<dbReference type="InterPro" id="IPR035437">
    <property type="entry name" value="SNase_OB-fold_sf"/>
</dbReference>
<dbReference type="InterPro" id="IPR002999">
    <property type="entry name" value="Tudor"/>
</dbReference>
<dbReference type="InterPro" id="IPR001841">
    <property type="entry name" value="Znf_RING"/>
</dbReference>
<dbReference type="InterPro" id="IPR017907">
    <property type="entry name" value="Znf_RING_CS"/>
</dbReference>
<dbReference type="PANTHER" id="PTHR16442">
    <property type="entry name" value="RING FINGER PROTEIN 17"/>
    <property type="match status" value="1"/>
</dbReference>
<dbReference type="PANTHER" id="PTHR16442:SF1">
    <property type="entry name" value="RING FINGER PROTEIN 17"/>
    <property type="match status" value="1"/>
</dbReference>
<dbReference type="Pfam" id="PF00567">
    <property type="entry name" value="TUDOR"/>
    <property type="match status" value="5"/>
</dbReference>
<dbReference type="SMART" id="SM00333">
    <property type="entry name" value="TUDOR"/>
    <property type="match status" value="4"/>
</dbReference>
<dbReference type="SUPFAM" id="SSF57850">
    <property type="entry name" value="RING/U-box"/>
    <property type="match status" value="1"/>
</dbReference>
<dbReference type="SUPFAM" id="SSF50199">
    <property type="entry name" value="Staphylococcal nuclease"/>
    <property type="match status" value="1"/>
</dbReference>
<dbReference type="SUPFAM" id="SSF63748">
    <property type="entry name" value="Tudor/PWWP/MBT"/>
    <property type="match status" value="5"/>
</dbReference>
<dbReference type="PROSITE" id="PS50304">
    <property type="entry name" value="TUDOR"/>
    <property type="match status" value="4"/>
</dbReference>
<dbReference type="PROSITE" id="PS00518">
    <property type="entry name" value="ZF_RING_1"/>
    <property type="match status" value="1"/>
</dbReference>
<dbReference type="PROSITE" id="PS50089">
    <property type="entry name" value="ZF_RING_2"/>
    <property type="match status" value="1"/>
</dbReference>
<evidence type="ECO:0000250" key="1"/>
<evidence type="ECO:0000250" key="2">
    <source>
        <dbReference type="UniProtKB" id="Q99MV7"/>
    </source>
</evidence>
<evidence type="ECO:0000255" key="3">
    <source>
        <dbReference type="PROSITE-ProRule" id="PRU00175"/>
    </source>
</evidence>
<evidence type="ECO:0000255" key="4">
    <source>
        <dbReference type="PROSITE-ProRule" id="PRU00211"/>
    </source>
</evidence>
<evidence type="ECO:0000256" key="5">
    <source>
        <dbReference type="SAM" id="MobiDB-lite"/>
    </source>
</evidence>
<evidence type="ECO:0000269" key="6">
    <source>
    </source>
</evidence>
<evidence type="ECO:0000269" key="7">
    <source>
    </source>
</evidence>
<evidence type="ECO:0000303" key="8">
    <source>
    </source>
</evidence>
<evidence type="ECO:0000303" key="9">
    <source>
    </source>
</evidence>
<evidence type="ECO:0000303" key="10">
    <source>
    </source>
</evidence>
<evidence type="ECO:0000305" key="11"/>
<evidence type="ECO:0007829" key="12">
    <source>
        <dbReference type="PDB" id="2EQK"/>
    </source>
</evidence>
<proteinExistence type="evidence at protein level"/>
<name>RNF17_HUMAN</name>
<keyword id="KW-0002">3D-structure</keyword>
<keyword id="KW-0007">Acetylation</keyword>
<keyword id="KW-0025">Alternative splicing</keyword>
<keyword id="KW-0963">Cytoplasm</keyword>
<keyword id="KW-0217">Developmental protein</keyword>
<keyword id="KW-0221">Differentiation</keyword>
<keyword id="KW-0479">Metal-binding</keyword>
<keyword id="KW-0539">Nucleus</keyword>
<keyword id="KW-1267">Proteomics identification</keyword>
<keyword id="KW-1185">Reference proteome</keyword>
<keyword id="KW-0677">Repeat</keyword>
<keyword id="KW-0744">Spermatogenesis</keyword>
<keyword id="KW-0862">Zinc</keyword>
<keyword id="KW-0863">Zinc-finger</keyword>
<accession>Q9BXT8</accession>
<accession>Q5T2J9</accession>
<accession>Q6P1W3</accession>
<accession>Q9BXT7</accession>
<accession>Q9NUY9</accession>
<feature type="chain" id="PRO_0000183165" description="RING finger protein 17">
    <location>
        <begin position="1"/>
        <end position="1623"/>
    </location>
</feature>
<feature type="domain" description="Tudor 1" evidence="4">
    <location>
        <begin position="726"/>
        <end position="784"/>
    </location>
</feature>
<feature type="domain" description="Tudor 2" evidence="4">
    <location>
        <begin position="962"/>
        <end position="1021"/>
    </location>
</feature>
<feature type="domain" description="Tudor 3" evidence="4">
    <location>
        <begin position="1228"/>
        <end position="1285"/>
    </location>
</feature>
<feature type="domain" description="Tudor 4" evidence="4">
    <location>
        <begin position="1479"/>
        <end position="1539"/>
    </location>
</feature>
<feature type="zinc finger region" description="RING-type" evidence="3">
    <location>
        <begin position="32"/>
        <end position="75"/>
    </location>
</feature>
<feature type="region of interest" description="Disordered" evidence="5">
    <location>
        <begin position="1"/>
        <end position="22"/>
    </location>
</feature>
<feature type="region of interest" description="Disordered" evidence="5">
    <location>
        <begin position="1438"/>
        <end position="1462"/>
    </location>
</feature>
<feature type="modified residue" description="N6-acetyllysine" evidence="2">
    <location>
        <position position="234"/>
    </location>
</feature>
<feature type="splice variant" id="VSP_005753" description="In isoform 3." evidence="8">
    <original>SSAELVFVSHVIDPCHFYIRKYSQIKDAKVLEKKVN</original>
    <variation>TCGTDDLGETPRYPKKPLQKNSSVPFGSKADTVTTV</variation>
    <location>
        <begin position="414"/>
        <end position="449"/>
    </location>
</feature>
<feature type="splice variant" id="VSP_005754" description="In isoform 3." evidence="8">
    <location>
        <begin position="450"/>
        <end position="1623"/>
    </location>
</feature>
<feature type="splice variant" id="VSP_033073" description="In isoform 2." evidence="8">
    <original>FKS</original>
    <variation>DLI</variation>
    <location>
        <begin position="651"/>
        <end position="653"/>
    </location>
</feature>
<feature type="splice variant" id="VSP_033074" description="In isoform 2." evidence="8">
    <location>
        <begin position="654"/>
        <end position="1623"/>
    </location>
</feature>
<feature type="splice variant" id="VSP_033075" description="In isoform 5." evidence="10">
    <location>
        <begin position="1320"/>
        <end position="1325"/>
    </location>
</feature>
<feature type="splice variant" id="VSP_033076" description="In isoform 4." evidence="9">
    <original>ELPKNPWEKLSIHLYFDGMSLSYFMAYYKYCTSEHTEEMLKEK</original>
    <variation>K</variation>
    <location>
        <begin position="1326"/>
        <end position="1368"/>
    </location>
</feature>
<feature type="sequence variant" id="VAR_024613" description="In dbSNP:rs1451568.">
    <original>K</original>
    <variation>N</variation>
    <location>
        <position position="346"/>
    </location>
</feature>
<feature type="sequence variant" id="VAR_028132" description="In dbSNP:rs9581180.">
    <original>G</original>
    <variation>S</variation>
    <location>
        <position position="467"/>
    </location>
</feature>
<feature type="sequence variant" id="VAR_028133" description="In dbSNP:rs9507413.">
    <original>S</original>
    <variation>G</variation>
    <location>
        <position position="501"/>
    </location>
</feature>
<feature type="sequence variant" id="VAR_052098" description="In dbSNP:rs10161760.">
    <original>A</original>
    <variation>P</variation>
    <location>
        <position position="573"/>
    </location>
</feature>
<feature type="sequence variant" id="VAR_052099" description="In dbSNP:rs9511451.">
    <original>H</original>
    <variation>R</variation>
    <location>
        <position position="667"/>
    </location>
</feature>
<feature type="sequence variant" id="VAR_052100" description="In dbSNP:rs3783082.">
    <original>N</original>
    <variation>K</variation>
    <location>
        <position position="1110"/>
    </location>
</feature>
<feature type="sequence variant" id="VAR_052101" description="In dbSNP:rs9507425." evidence="6 7">
    <original>E</original>
    <variation>K</variation>
    <location>
        <position position="1380"/>
    </location>
</feature>
<feature type="sequence conflict" description="In Ref. 1; AAK31981." evidence="11" ref="1">
    <original>P</original>
    <variation>S</variation>
    <location>
        <position position="361"/>
    </location>
</feature>
<feature type="helix" evidence="12">
    <location>
        <begin position="949"/>
        <end position="955"/>
    </location>
</feature>
<feature type="strand" evidence="12">
    <location>
        <begin position="968"/>
        <end position="972"/>
    </location>
</feature>
<feature type="strand" evidence="12">
    <location>
        <begin position="974"/>
        <end position="976"/>
    </location>
</feature>
<feature type="strand" evidence="12">
    <location>
        <begin position="979"/>
        <end position="987"/>
    </location>
</feature>
<feature type="strand" evidence="12">
    <location>
        <begin position="989"/>
        <end position="996"/>
    </location>
</feature>
<feature type="turn" evidence="12">
    <location>
        <begin position="998"/>
        <end position="1000"/>
    </location>
</feature>
<feature type="strand" evidence="12">
    <location>
        <begin position="1003"/>
        <end position="1007"/>
    </location>
</feature>
<feature type="turn" evidence="12">
    <location>
        <begin position="1008"/>
        <end position="1010"/>
    </location>
</feature>
<feature type="strand" evidence="12">
    <location>
        <begin position="1011"/>
        <end position="1013"/>
    </location>
</feature>
<feature type="helix" evidence="12">
    <location>
        <begin position="1016"/>
        <end position="1019"/>
    </location>
</feature>
<reference key="1">
    <citation type="journal article" date="2001" name="Nat. Genet.">
        <title>An abundance of X-linked genes expressed in spermatogonia.</title>
        <authorList>
            <person name="Wang P.J."/>
            <person name="McCarrey J.R."/>
            <person name="Yang F."/>
            <person name="Page D.C."/>
        </authorList>
    </citation>
    <scope>NUCLEOTIDE SEQUENCE [MRNA] (ISOFORMS 2 AND 3)</scope>
    <source>
        <tissue>Testis</tissue>
    </source>
</reference>
<reference key="2">
    <citation type="journal article" date="2004" name="Nature">
        <title>The DNA sequence and analysis of human chromosome 13.</title>
        <authorList>
            <person name="Dunham A."/>
            <person name="Matthews L.H."/>
            <person name="Burton J."/>
            <person name="Ashurst J.L."/>
            <person name="Howe K.L."/>
            <person name="Ashcroft K.J."/>
            <person name="Beare D.M."/>
            <person name="Burford D.C."/>
            <person name="Hunt S.E."/>
            <person name="Griffiths-Jones S."/>
            <person name="Jones M.C."/>
            <person name="Keenan S.J."/>
            <person name="Oliver K."/>
            <person name="Scott C.E."/>
            <person name="Ainscough R."/>
            <person name="Almeida J.P."/>
            <person name="Ambrose K.D."/>
            <person name="Andrews D.T."/>
            <person name="Ashwell R.I.S."/>
            <person name="Babbage A.K."/>
            <person name="Bagguley C.L."/>
            <person name="Bailey J."/>
            <person name="Bannerjee R."/>
            <person name="Barlow K.F."/>
            <person name="Bates K."/>
            <person name="Beasley H."/>
            <person name="Bird C.P."/>
            <person name="Bray-Allen S."/>
            <person name="Brown A.J."/>
            <person name="Brown J.Y."/>
            <person name="Burrill W."/>
            <person name="Carder C."/>
            <person name="Carter N.P."/>
            <person name="Chapman J.C."/>
            <person name="Clamp M.E."/>
            <person name="Clark S.Y."/>
            <person name="Clarke G."/>
            <person name="Clee C.M."/>
            <person name="Clegg S.C."/>
            <person name="Cobley V."/>
            <person name="Collins J.E."/>
            <person name="Corby N."/>
            <person name="Coville G.J."/>
            <person name="Deloukas P."/>
            <person name="Dhami P."/>
            <person name="Dunham I."/>
            <person name="Dunn M."/>
            <person name="Earthrowl M.E."/>
            <person name="Ellington A.G."/>
            <person name="Faulkner L."/>
            <person name="Frankish A.G."/>
            <person name="Frankland J."/>
            <person name="French L."/>
            <person name="Garner P."/>
            <person name="Garnett J."/>
            <person name="Gilbert J.G.R."/>
            <person name="Gilson C.J."/>
            <person name="Ghori J."/>
            <person name="Grafham D.V."/>
            <person name="Gribble S.M."/>
            <person name="Griffiths C."/>
            <person name="Hall R.E."/>
            <person name="Hammond S."/>
            <person name="Harley J.L."/>
            <person name="Hart E.A."/>
            <person name="Heath P.D."/>
            <person name="Howden P.J."/>
            <person name="Huckle E.J."/>
            <person name="Hunt P.J."/>
            <person name="Hunt A.R."/>
            <person name="Johnson C."/>
            <person name="Johnson D."/>
            <person name="Kay M."/>
            <person name="Kimberley A.M."/>
            <person name="King A."/>
            <person name="Laird G.K."/>
            <person name="Langford C.J."/>
            <person name="Lawlor S."/>
            <person name="Leongamornlert D.A."/>
            <person name="Lloyd D.M."/>
            <person name="Lloyd C."/>
            <person name="Loveland J.E."/>
            <person name="Lovell J."/>
            <person name="Martin S."/>
            <person name="Mashreghi-Mohammadi M."/>
            <person name="McLaren S.J."/>
            <person name="McMurray A."/>
            <person name="Milne S."/>
            <person name="Moore M.J.F."/>
            <person name="Nickerson T."/>
            <person name="Palmer S.A."/>
            <person name="Pearce A.V."/>
            <person name="Peck A.I."/>
            <person name="Pelan S."/>
            <person name="Phillimore B."/>
            <person name="Porter K.M."/>
            <person name="Rice C.M."/>
            <person name="Searle S."/>
            <person name="Sehra H.K."/>
            <person name="Shownkeen R."/>
            <person name="Skuce C.D."/>
            <person name="Smith M."/>
            <person name="Steward C.A."/>
            <person name="Sycamore N."/>
            <person name="Tester J."/>
            <person name="Thomas D.W."/>
            <person name="Tracey A."/>
            <person name="Tromans A."/>
            <person name="Tubby B."/>
            <person name="Wall M."/>
            <person name="Wallis J.M."/>
            <person name="West A.P."/>
            <person name="Whitehead S.L."/>
            <person name="Willey D.L."/>
            <person name="Wilming L."/>
            <person name="Wray P.W."/>
            <person name="Wright M.W."/>
            <person name="Young L."/>
            <person name="Coulson A."/>
            <person name="Durbin R.M."/>
            <person name="Hubbard T."/>
            <person name="Sulston J.E."/>
            <person name="Beck S."/>
            <person name="Bentley D.R."/>
            <person name="Rogers J."/>
            <person name="Ross M.T."/>
        </authorList>
    </citation>
    <scope>NUCLEOTIDE SEQUENCE [LARGE SCALE GENOMIC DNA]</scope>
</reference>
<reference key="3">
    <citation type="journal article" date="2004" name="Genome Res.">
        <title>The status, quality, and expansion of the NIH full-length cDNA project: the Mammalian Gene Collection (MGC).</title>
        <authorList>
            <consortium name="The MGC Project Team"/>
        </authorList>
    </citation>
    <scope>NUCLEOTIDE SEQUENCE [LARGE SCALE MRNA] OF 765-1623 (ISOFORM 5)</scope>
    <scope>VARIANT LYS-1380</scope>
    <source>
        <tissue>Testis</tissue>
    </source>
</reference>
<reference key="4">
    <citation type="journal article" date="2004" name="Nat. Genet.">
        <title>Complete sequencing and characterization of 21,243 full-length human cDNAs.</title>
        <authorList>
            <person name="Ota T."/>
            <person name="Suzuki Y."/>
            <person name="Nishikawa T."/>
            <person name="Otsuki T."/>
            <person name="Sugiyama T."/>
            <person name="Irie R."/>
            <person name="Wakamatsu A."/>
            <person name="Hayashi K."/>
            <person name="Sato H."/>
            <person name="Nagai K."/>
            <person name="Kimura K."/>
            <person name="Makita H."/>
            <person name="Sekine M."/>
            <person name="Obayashi M."/>
            <person name="Nishi T."/>
            <person name="Shibahara T."/>
            <person name="Tanaka T."/>
            <person name="Ishii S."/>
            <person name="Yamamoto J."/>
            <person name="Saito K."/>
            <person name="Kawai Y."/>
            <person name="Isono Y."/>
            <person name="Nakamura Y."/>
            <person name="Nagahari K."/>
            <person name="Murakami K."/>
            <person name="Yasuda T."/>
            <person name="Iwayanagi T."/>
            <person name="Wagatsuma M."/>
            <person name="Shiratori A."/>
            <person name="Sudo H."/>
            <person name="Hosoiri T."/>
            <person name="Kaku Y."/>
            <person name="Kodaira H."/>
            <person name="Kondo H."/>
            <person name="Sugawara M."/>
            <person name="Takahashi M."/>
            <person name="Kanda K."/>
            <person name="Yokoi T."/>
            <person name="Furuya T."/>
            <person name="Kikkawa E."/>
            <person name="Omura Y."/>
            <person name="Abe K."/>
            <person name="Kamihara K."/>
            <person name="Katsuta N."/>
            <person name="Sato K."/>
            <person name="Tanikawa M."/>
            <person name="Yamazaki M."/>
            <person name="Ninomiya K."/>
            <person name="Ishibashi T."/>
            <person name="Yamashita H."/>
            <person name="Murakawa K."/>
            <person name="Fujimori K."/>
            <person name="Tanai H."/>
            <person name="Kimata M."/>
            <person name="Watanabe M."/>
            <person name="Hiraoka S."/>
            <person name="Chiba Y."/>
            <person name="Ishida S."/>
            <person name="Ono Y."/>
            <person name="Takiguchi S."/>
            <person name="Watanabe S."/>
            <person name="Yosida M."/>
            <person name="Hotuta T."/>
            <person name="Kusano J."/>
            <person name="Kanehori K."/>
            <person name="Takahashi-Fujii A."/>
            <person name="Hara H."/>
            <person name="Tanase T.-O."/>
            <person name="Nomura Y."/>
            <person name="Togiya S."/>
            <person name="Komai F."/>
            <person name="Hara R."/>
            <person name="Takeuchi K."/>
            <person name="Arita M."/>
            <person name="Imose N."/>
            <person name="Musashino K."/>
            <person name="Yuuki H."/>
            <person name="Oshima A."/>
            <person name="Sasaki N."/>
            <person name="Aotsuka S."/>
            <person name="Yoshikawa Y."/>
            <person name="Matsunawa H."/>
            <person name="Ichihara T."/>
            <person name="Shiohata N."/>
            <person name="Sano S."/>
            <person name="Moriya S."/>
            <person name="Momiyama H."/>
            <person name="Satoh N."/>
            <person name="Takami S."/>
            <person name="Terashima Y."/>
            <person name="Suzuki O."/>
            <person name="Nakagawa S."/>
            <person name="Senoh A."/>
            <person name="Mizoguchi H."/>
            <person name="Goto Y."/>
            <person name="Shimizu F."/>
            <person name="Wakebe H."/>
            <person name="Hishigaki H."/>
            <person name="Watanabe T."/>
            <person name="Sugiyama A."/>
            <person name="Takemoto M."/>
            <person name="Kawakami B."/>
            <person name="Yamazaki M."/>
            <person name="Watanabe K."/>
            <person name="Kumagai A."/>
            <person name="Itakura S."/>
            <person name="Fukuzumi Y."/>
            <person name="Fujimori Y."/>
            <person name="Komiyama M."/>
            <person name="Tashiro H."/>
            <person name="Tanigami A."/>
            <person name="Fujiwara T."/>
            <person name="Ono T."/>
            <person name="Yamada K."/>
            <person name="Fujii Y."/>
            <person name="Ozaki K."/>
            <person name="Hirao M."/>
            <person name="Ohmori Y."/>
            <person name="Kawabata A."/>
            <person name="Hikiji T."/>
            <person name="Kobatake N."/>
            <person name="Inagaki H."/>
            <person name="Ikema Y."/>
            <person name="Okamoto S."/>
            <person name="Okitani R."/>
            <person name="Kawakami T."/>
            <person name="Noguchi S."/>
            <person name="Itoh T."/>
            <person name="Shigeta K."/>
            <person name="Senba T."/>
            <person name="Matsumura K."/>
            <person name="Nakajima Y."/>
            <person name="Mizuno T."/>
            <person name="Morinaga M."/>
            <person name="Sasaki M."/>
            <person name="Togashi T."/>
            <person name="Oyama M."/>
            <person name="Hata H."/>
            <person name="Watanabe M."/>
            <person name="Komatsu T."/>
            <person name="Mizushima-Sugano J."/>
            <person name="Satoh T."/>
            <person name="Shirai Y."/>
            <person name="Takahashi Y."/>
            <person name="Nakagawa K."/>
            <person name="Okumura K."/>
            <person name="Nagase T."/>
            <person name="Nomura N."/>
            <person name="Kikuchi H."/>
            <person name="Masuho Y."/>
            <person name="Yamashita R."/>
            <person name="Nakai K."/>
            <person name="Yada T."/>
            <person name="Nakamura Y."/>
            <person name="Ohara O."/>
            <person name="Isogai T."/>
            <person name="Sugano S."/>
        </authorList>
    </citation>
    <scope>NUCLEOTIDE SEQUENCE [LARGE SCALE MRNA] OF 914-1623 (ISOFORM 4)</scope>
    <scope>VARIANT LYS-1380</scope>
    <source>
        <tissue>Placenta</tissue>
    </source>
</reference>
<reference key="5">
    <citation type="submission" date="2007-10" db="PDB data bank">
        <title>Solution structure of the tudor domain of tudor domain-containing protein 4.</title>
        <authorList>
            <consortium name="RIKEN structural genomics initiative (RSGI)"/>
        </authorList>
    </citation>
    <scope>STRUCTURE BY NMR OF 949-1026</scope>
</reference>
<gene>
    <name type="primary">RNF17</name>
    <name type="synonym">TDRD4</name>
</gene>
<protein>
    <recommendedName>
        <fullName>RING finger protein 17</fullName>
    </recommendedName>
    <alternativeName>
        <fullName>Tudor domain-containing protein 4</fullName>
    </alternativeName>
</protein>
<sequence length="1623" mass="184643">MAAEASKTGPSRSSYQRMGRKSQPWGAAEIQCTRCGRRVSRSSGHHCELQCGHAFCELCLLMTEECTTIICPDCEVATAVNTRQRYYPMAGYIKEDSIMEKLQPKTIKNCSQDFKKTADQLTTGLERSASTDKTLLNSSAVMLDTNTAEEIDEALNTAHHSFEQLSIAGKALEHMQKQTIEERERVIEVVEKQFDQLLAFFDSRKKNLCEEFARTTDDYLSNLIKAKSYIEEKKNNLNAAMNIARALQLSPSLRTYCDLNQIIRTLQLTSDSELAQVSSPQLRNPPRLSVNCSEIICMFNNMGKIEFRDSTKCYPQENEIRQNVQKKYNNKKELSCYDTYPPLEKKKVDMSVLTSEAPPPPLQPETNDVHLEAKNFQPQKDVATASPKTIAVLPQMGSSPDVIIEEIIEDNVESSAELVFVSHVIDPCHFYIRKYSQIKDAKVLEKKVNEFCNRSSHLDPSDILELGARIFVSSIKNGMWCRGTITELIPIEGRNTRKPCSPTRLFVHEVALIQIFMVDFGNSEVLIVTGVVDTHVRPEHSAKQHIALNDLCLVLRKSEPYTEGLLKDIQPLAQPCSLKDIVPQNSNEGWEEEAKVEFLKMVNNKAVSMKVFREEDGVLIVDLQKPPPNKISSDMPVSLRDALVFMELAKFKSQSLRSHFEKNTTLHYHPPILPKEMTDVSVTVCHINSPGDFYLQLIEGLDILFLLKTIEEFYKSEDGENLEILCPVQDQACVAKFEDGIWYRAKVIGLPGHQEVEVKYVDFGNTAKITIKDVRKIKDEFLNAPEKAIKCKLAYIEPYKRTMQWSKEAKEKFEEKAQDKFMTCSVIKILEDNVLLVELFDSLGAPEMTTTSINDQLVKEGLASYEIGYILKDNSQKHIEVWDPSPEEIISNEVHNLNPVSAKSLPNENFQSLYNKELPVHICNVISPEKIYVQWLLTENLLNSLEEKMIAAYENSKWEPVKWENDMHCAVKIQDKNQWRRGQIIRMVTDTLVEVLLYDVGVELVVNVDCLRKLEENLKTMGRLSLECSLVDIRPAGGSDKWTATACDCLSLYLTGAVATIILQVDSEENNTTWPLPVKIFCRDEKGERVDVSKYLIKKGLALRERRINNLDNSHSLSEKSLEVPLEQEDSVVTNCIKTNFDPDKKTADIISEQKVSEFQEKILEPRTTRGYKPPAIPNMNVFEATVSCVGDDGTIFVVPKLSEFELIKMTNEIQSNLKCLGLLEPYFWKKGEACAVRGSDTLWYRGKVMEVVGGAVRVQYLDHGFTEKIPQCHLYPILLYPDIPQFCIPCQLHNTTPVGNVWQPDAIEVLQQLLSKRQVDIHIMELPKNPWEKLSIHLYFDGMSLSYFMAYYKYCTSEHTEEMLKEKPRSDHDKKYEEEQWEIRFEELLSAETDTPLLPPYLSSSLPSPGELYAVQVKHVVSPNEVYICLDSIETSNQSNQHSDTDDSGVSGESESESLDEALQRVNKKVEALPPLTDFRTEMPCLAEYDDGLWYRAKIVAIKEFNPLSILVQFVDYGSTAKLTLNRLCQIPSHLMRYPARAIKVLLAGFKPPLRDLGETRIPYCPKWSMEALWAMIDCLQGKQLYAVSMAPAPEQIVTLYDDEQHPVHMPLVEMGLADKDE</sequence>
<comment type="function">
    <text evidence="1">Seems to be involved in regulation of transcriptional activity of MYC. In vitro, inhibits DNA-binding activity of Mad-MAX heterodimers. Can recruit Mad transcriptional repressors (MXD1, MXD3, MXD4 and MXI1) to the cytoplasm. May be involved in spermiogenesis (By similarity).</text>
</comment>
<comment type="subunit">
    <text evidence="1">Interacts with MXD1, MXD3, MXD4, MXI1 and PIWIL1. Self-associates (By similarity).</text>
</comment>
<comment type="subcellular location">
    <subcellularLocation>
        <location evidence="1">Cytoplasm</location>
    </subcellularLocation>
    <subcellularLocation>
        <location evidence="1">Nucleus</location>
    </subcellularLocation>
    <text evidence="1">Predominantly found in the cytoplasm. Component of a nuage in male germ cells (an electron-dense spherical cytoplasmic body present in late pachytene and diplotene spermatocytes and in elonging spermatids) (By similarity).</text>
</comment>
<comment type="alternative products">
    <event type="alternative splicing"/>
    <isoform>
        <id>Q9BXT8-3</id>
        <name>1</name>
        <sequence type="displayed"/>
    </isoform>
    <isoform>
        <id>Q9BXT8-1</id>
        <name>2</name>
        <sequence type="described" ref="VSP_033073 VSP_033074"/>
    </isoform>
    <isoform>
        <id>Q9BXT8-2</id>
        <name>3</name>
        <sequence type="described" ref="VSP_005753 VSP_005754"/>
    </isoform>
    <isoform>
        <id>Q9BXT8-4</id>
        <name>4</name>
        <sequence type="described" ref="VSP_033076"/>
    </isoform>
    <isoform>
        <id>Q9BXT8-5</id>
        <name>5</name>
        <sequence type="described" ref="VSP_033075"/>
    </isoform>
</comment>
<comment type="tissue specificity">
    <text>Testis specific.</text>
</comment>
<comment type="sequence caution" evidence="11">
    <conflict type="erroneous initiation">
        <sequence resource="EMBL-CDS" id="AAH64847"/>
    </conflict>
</comment>
<comment type="sequence caution" evidence="11">
    <conflict type="erroneous initiation">
        <sequence resource="EMBL-CDS" id="BAA91972"/>
    </conflict>
</comment>
<organism>
    <name type="scientific">Homo sapiens</name>
    <name type="common">Human</name>
    <dbReference type="NCBI Taxonomy" id="9606"/>
    <lineage>
        <taxon>Eukaryota</taxon>
        <taxon>Metazoa</taxon>
        <taxon>Chordata</taxon>
        <taxon>Craniata</taxon>
        <taxon>Vertebrata</taxon>
        <taxon>Euteleostomi</taxon>
        <taxon>Mammalia</taxon>
        <taxon>Eutheria</taxon>
        <taxon>Euarchontoglires</taxon>
        <taxon>Primates</taxon>
        <taxon>Haplorrhini</taxon>
        <taxon>Catarrhini</taxon>
        <taxon>Hominidae</taxon>
        <taxon>Homo</taxon>
    </lineage>
</organism>